<feature type="chain" id="PRO_0000344244" description="Heme A synthase">
    <location>
        <begin position="1"/>
        <end position="317"/>
    </location>
</feature>
<feature type="topological domain" description="Cytoplasmic" evidence="1">
    <location>
        <begin position="1"/>
        <end position="6"/>
    </location>
</feature>
<feature type="transmembrane region" description="Helical" evidence="1">
    <location>
        <begin position="7"/>
        <end position="27"/>
    </location>
</feature>
<feature type="topological domain" description="Extracellular" evidence="1">
    <location>
        <begin position="28"/>
        <end position="54"/>
    </location>
</feature>
<feature type="transmembrane region" description="Helical" evidence="1">
    <location>
        <begin position="55"/>
        <end position="75"/>
    </location>
</feature>
<feature type="topological domain" description="Cytoplasmic" evidence="1">
    <location>
        <begin position="76"/>
        <end position="91"/>
    </location>
</feature>
<feature type="transmembrane region" description="Helical" evidence="1">
    <location>
        <begin position="92"/>
        <end position="112"/>
    </location>
</feature>
<feature type="topological domain" description="Extracellular" evidence="1">
    <location>
        <begin position="113"/>
        <end position="123"/>
    </location>
</feature>
<feature type="transmembrane region" description="Helical" evidence="1">
    <location>
        <begin position="124"/>
        <end position="144"/>
    </location>
</feature>
<feature type="topological domain" description="Cytoplasmic" evidence="1">
    <location>
        <begin position="145"/>
        <end position="159"/>
    </location>
</feature>
<feature type="transmembrane region" description="Helical" evidence="1">
    <location>
        <begin position="160"/>
        <end position="180"/>
    </location>
</feature>
<feature type="topological domain" description="Extracellular" evidence="1">
    <location>
        <begin position="181"/>
        <end position="214"/>
    </location>
</feature>
<feature type="transmembrane region" description="Helical" evidence="1">
    <location>
        <begin position="215"/>
        <end position="235"/>
    </location>
</feature>
<feature type="topological domain" description="Cytoplasmic" evidence="1">
    <location>
        <begin position="236"/>
        <end position="243"/>
    </location>
</feature>
<feature type="transmembrane region" description="Helical" evidence="1">
    <location>
        <begin position="244"/>
        <end position="264"/>
    </location>
</feature>
<feature type="topological domain" description="Extracellular" evidence="1">
    <location>
        <begin position="265"/>
        <end position="272"/>
    </location>
</feature>
<feature type="transmembrane region" description="Helical" evidence="1">
    <location>
        <begin position="273"/>
        <end position="293"/>
    </location>
</feature>
<feature type="topological domain" description="Cytoplasmic" evidence="1">
    <location>
        <begin position="294"/>
        <end position="317"/>
    </location>
</feature>
<feature type="active site" evidence="1">
    <location>
        <position position="58"/>
    </location>
</feature>
<feature type="binding site" description="axial binding residue" evidence="1">
    <location>
        <position position="61"/>
    </location>
    <ligand>
        <name>heme o</name>
        <dbReference type="ChEBI" id="CHEBI:24480"/>
    </ligand>
    <ligandPart>
        <name>Fe</name>
        <dbReference type="ChEBI" id="CHEBI:18248"/>
    </ligandPart>
</feature>
<feature type="binding site" description="axial binding residue" evidence="1">
    <location>
        <position position="123"/>
    </location>
    <ligand>
        <name>heme o</name>
        <dbReference type="ChEBI" id="CHEBI:24480"/>
    </ligand>
    <ligandPart>
        <name>Fe</name>
        <dbReference type="ChEBI" id="CHEBI:18248"/>
    </ligandPart>
</feature>
<feature type="binding site" description="axial binding residue" evidence="1">
    <location>
        <position position="213"/>
    </location>
    <ligand>
        <name>heme b</name>
        <dbReference type="ChEBI" id="CHEBI:60344"/>
    </ligand>
    <ligandPart>
        <name>Fe</name>
        <dbReference type="ChEBI" id="CHEBI:18248"/>
    </ligandPart>
</feature>
<feature type="binding site" description="axial binding residue" evidence="1">
    <location>
        <position position="275"/>
    </location>
    <ligand>
        <name>heme b</name>
        <dbReference type="ChEBI" id="CHEBI:60344"/>
    </ligand>
    <ligandPart>
        <name>Fe</name>
        <dbReference type="ChEBI" id="CHEBI:18248"/>
    </ligandPart>
</feature>
<feature type="disulfide bond" description="Essential for catalytic activity" evidence="1">
    <location>
        <begin position="35"/>
        <end position="42"/>
    </location>
</feature>
<feature type="disulfide bond" evidence="1">
    <location>
        <begin position="189"/>
        <end position="195"/>
    </location>
</feature>
<reference key="1">
    <citation type="journal article" date="1996" name="Biochim. Biophys. Acta">
        <title>Nucleotide and amino acid sequences for cytochrome caa3-type oxidase of Bacillus stearothermophilus K1041 and non-Michaelis-type kinetics with cytochrome c.</title>
        <authorList>
            <person name="Kusano T."/>
            <person name="Kuge S."/>
            <person name="Sakamoto J."/>
            <person name="Noguchi S."/>
            <person name="Sone N."/>
        </authorList>
    </citation>
    <scope>NUCLEOTIDE SEQUENCE [GENOMIC DNA]</scope>
    <source>
        <strain>K1041</strain>
    </source>
</reference>
<reference key="2">
    <citation type="journal article" date="1999" name="Biosci. Biotechnol. Biochem.">
        <title>Cloning of Bacillus stearothermophilus ctaA and heme A synthesis with the CtaA protein produced in Escherichia coli.</title>
        <authorList>
            <person name="Sakamoto J."/>
            <person name="Hayakawa A."/>
            <person name="Uehara T."/>
            <person name="Noguchi S."/>
            <person name="Sone N."/>
        </authorList>
    </citation>
    <scope>PROTEIN SEQUENCE OF 1-6</scope>
    <scope>FUNCTION</scope>
    <scope>COFACTOR</scope>
    <scope>SUBCELLULAR LOCATION</scope>
    <source>
        <strain>K1041</strain>
    </source>
</reference>
<keyword id="KW-1003">Cell membrane</keyword>
<keyword id="KW-0903">Direct protein sequencing</keyword>
<keyword id="KW-1015">Disulfide bond</keyword>
<keyword id="KW-0350">Heme biosynthesis</keyword>
<keyword id="KW-0408">Iron</keyword>
<keyword id="KW-0472">Membrane</keyword>
<keyword id="KW-0479">Metal-binding</keyword>
<keyword id="KW-0560">Oxidoreductase</keyword>
<keyword id="KW-0812">Transmembrane</keyword>
<keyword id="KW-1133">Transmembrane helix</keyword>
<dbReference type="EC" id="1.17.99.9" evidence="1"/>
<dbReference type="EMBL" id="D70843">
    <property type="protein sequence ID" value="BAA35111.1"/>
    <property type="status" value="ALT_INIT"/>
    <property type="molecule type" value="Genomic_DNA"/>
</dbReference>
<dbReference type="SMR" id="P94346"/>
<dbReference type="STRING" id="33940.GTHT12_00517"/>
<dbReference type="UniPathway" id="UPA00269">
    <property type="reaction ID" value="UER00713"/>
</dbReference>
<dbReference type="GO" id="GO:0005886">
    <property type="term" value="C:plasma membrane"/>
    <property type="evidence" value="ECO:0007669"/>
    <property type="project" value="UniProtKB-SubCell"/>
</dbReference>
<dbReference type="GO" id="GO:0046872">
    <property type="term" value="F:metal ion binding"/>
    <property type="evidence" value="ECO:0007669"/>
    <property type="project" value="UniProtKB-KW"/>
</dbReference>
<dbReference type="GO" id="GO:0016653">
    <property type="term" value="F:oxidoreductase activity, acting on NAD(P)H, heme protein as acceptor"/>
    <property type="evidence" value="ECO:0007669"/>
    <property type="project" value="InterPro"/>
</dbReference>
<dbReference type="GO" id="GO:0006784">
    <property type="term" value="P:heme A biosynthetic process"/>
    <property type="evidence" value="ECO:0007669"/>
    <property type="project" value="UniProtKB-UniRule"/>
</dbReference>
<dbReference type="HAMAP" id="MF_01664">
    <property type="entry name" value="HemeA_synth_type1"/>
    <property type="match status" value="1"/>
</dbReference>
<dbReference type="InterPro" id="IPR003780">
    <property type="entry name" value="COX15/CtaA_fam"/>
</dbReference>
<dbReference type="InterPro" id="IPR050450">
    <property type="entry name" value="COX15/CtaA_HemeA_synthase"/>
</dbReference>
<dbReference type="InterPro" id="IPR023755">
    <property type="entry name" value="HemeA_Synthase_type1"/>
</dbReference>
<dbReference type="PANTHER" id="PTHR35457">
    <property type="entry name" value="HEME A SYNTHASE"/>
    <property type="match status" value="1"/>
</dbReference>
<dbReference type="PANTHER" id="PTHR35457:SF1">
    <property type="entry name" value="HEME A SYNTHASE"/>
    <property type="match status" value="1"/>
</dbReference>
<dbReference type="Pfam" id="PF02628">
    <property type="entry name" value="COX15-CtaA"/>
    <property type="match status" value="1"/>
</dbReference>
<proteinExistence type="evidence at protein level"/>
<gene>
    <name evidence="1 3" type="primary">ctaA</name>
</gene>
<name>CTAA_GEOTD</name>
<organism>
    <name type="scientific">Geobacillus thermodenitrificans</name>
    <dbReference type="NCBI Taxonomy" id="33940"/>
    <lineage>
        <taxon>Bacteria</taxon>
        <taxon>Bacillati</taxon>
        <taxon>Bacillota</taxon>
        <taxon>Bacilli</taxon>
        <taxon>Bacillales</taxon>
        <taxon>Anoxybacillaceae</taxon>
        <taxon>Geobacillus</taxon>
    </lineage>
</organism>
<accession>P94346</accession>
<sequence length="317" mass="35101">MQRSLKWFASTTTVAMLFVLIGGALVTKTDSGMGCGRSWPLCHGQWIPDDITPQLVIELSHRLVSGLAAIMVLILCIRSWRVMGHVRETKPLAVLSFVFLVLQSLIGAAAVVWGQSDFVMALHFGISLISFAAVLLLTLLIFVVDKKFSPTSLQLDGQMRFHIYGIIIYSYLVVYTGALVRHTNASLACPSWPLCAKSRLLPVQFHEWVQMGHRLAAAVIIIWIAVATVHAARYYREQPVIYYGWIISLLLVLAQMVTGALVVFTELNLYISLAHAFFISCLFGVLSYLLLLALRTRRRPATAAGRSVEDTASAPLK</sequence>
<evidence type="ECO:0000255" key="1">
    <source>
        <dbReference type="HAMAP-Rule" id="MF_01664"/>
    </source>
</evidence>
<evidence type="ECO:0000269" key="2">
    <source>
    </source>
</evidence>
<evidence type="ECO:0000303" key="3">
    <source>
    </source>
</evidence>
<evidence type="ECO:0000305" key="4"/>
<evidence type="ECO:0000305" key="5">
    <source>
    </source>
</evidence>
<protein>
    <recommendedName>
        <fullName evidence="1">Heme A synthase</fullName>
        <shortName evidence="1">HAS</shortName>
        <ecNumber evidence="1">1.17.99.9</ecNumber>
    </recommendedName>
    <alternativeName>
        <fullName evidence="1">Cytochrome aa3-controlling protein</fullName>
    </alternativeName>
</protein>
<comment type="function">
    <text evidence="1 2">Catalyzes the conversion of heme O to heme A by two successive hydroxylations of the methyl group at C8. The first hydroxylation forms heme I, the second hydroxylation results in an unstable dihydroxymethyl group, which spontaneously dehydrates, resulting in the formyl group of heme A.</text>
</comment>
<comment type="catalytic activity">
    <reaction evidence="1">
        <text>Fe(II)-heme o + 2 A + H2O = Fe(II)-heme a + 2 AH2</text>
        <dbReference type="Rhea" id="RHEA:63388"/>
        <dbReference type="ChEBI" id="CHEBI:13193"/>
        <dbReference type="ChEBI" id="CHEBI:15377"/>
        <dbReference type="ChEBI" id="CHEBI:17499"/>
        <dbReference type="ChEBI" id="CHEBI:60530"/>
        <dbReference type="ChEBI" id="CHEBI:61715"/>
        <dbReference type="EC" id="1.17.99.9"/>
    </reaction>
    <physiologicalReaction direction="left-to-right" evidence="1">
        <dbReference type="Rhea" id="RHEA:63389"/>
    </physiologicalReaction>
</comment>
<comment type="cofactor">
    <cofactor evidence="1 2">
        <name>heme b</name>
        <dbReference type="ChEBI" id="CHEBI:60344"/>
    </cofactor>
</comment>
<comment type="pathway">
    <text evidence="1 5">Porphyrin-containing compound metabolism; heme A biosynthesis; heme A from heme O: step 1/1.</text>
</comment>
<comment type="subunit">
    <text evidence="1">Interacts with CtaB.</text>
</comment>
<comment type="subcellular location">
    <subcellularLocation>
        <location evidence="1 2">Cell membrane</location>
        <topology evidence="1">Multi-pass membrane protein</topology>
    </subcellularLocation>
</comment>
<comment type="domain">
    <text evidence="1">The N-half (TM1-TM4) and C-half (TM5-TM8) domains are connected by an intracellular loop. Each domain is formed from four-helix bundles and they align in a pseudo twofold symmetry manner. The N-half domain is the substrate-heme O binding domain and the C-half domain is the cofactor heme B binding domain.</text>
</comment>
<comment type="domain">
    <text evidence="1">The cysteines of disulfide bond Cys-35 and Cys-42 may be involved in transfer of reducing equivalents from quinol in the membrane to the active site of the enzyme.</text>
</comment>
<comment type="similarity">
    <text evidence="1 4">Belongs to the COX15/CtaA family. Type 1 subfamily.</text>
</comment>
<comment type="sequence caution" evidence="4">
    <conflict type="erroneous initiation">
        <sequence resource="EMBL-CDS" id="BAA35111"/>
    </conflict>
</comment>